<sequence>MFNKLSTPIHIIGGGLAGCEASWQIAQSGIPVILHEMRPQKKSEAHKTGQLAELVCSNSFRSDDSSTNAVGLLHTEMRLAKSLIMKAADANKVPAGSALAVDRDGFSKTVTAALENHPLITIKREEIQEIPENWPHIIIATGPLTSPKLAKAIQTITGTEALSFFDAIAPIIYTDSINMDICWYQSRYDKIGPEGTGKDYLNCPLNKEQYEAFVQALKNAEKTEFRDFEKTPYFDGCLPIEVMAERGLETLRHGPMKPMGLTNAHNPTVKAYAVVQLRQDNKLGTLYNMVGFQTKLKYGEQVRIFRMIPGLENAEFARLGGLHRNTYLNSPIILDQTLRLKQRPGLRFAGQITGCEGYVESSAIGLLAGRFAAAEYHYNCPCLPPLTTALGALLNHITGGHIVDEKTGRKSFQPMNINFGLFPPIASASYSGKRLPSKEKKLAKKQAITARALNTCIQWLINEEKNKL</sequence>
<dbReference type="EC" id="2.1.1.74" evidence="1"/>
<dbReference type="EMBL" id="BX897699">
    <property type="protein sequence ID" value="CAF27400.1"/>
    <property type="molecule type" value="Genomic_DNA"/>
</dbReference>
<dbReference type="RefSeq" id="WP_011180520.1">
    <property type="nucleotide sequence ID" value="NZ_LRIJ02000001.1"/>
</dbReference>
<dbReference type="SMR" id="Q6G3Y9"/>
<dbReference type="PaxDb" id="283166-BH05920"/>
<dbReference type="EnsemblBacteria" id="CAF27400">
    <property type="protein sequence ID" value="CAF27400"/>
    <property type="gene ID" value="BH05920"/>
</dbReference>
<dbReference type="GeneID" id="92985251"/>
<dbReference type="KEGG" id="bhe:BH05920"/>
<dbReference type="eggNOG" id="COG1206">
    <property type="taxonomic scope" value="Bacteria"/>
</dbReference>
<dbReference type="OrthoDB" id="9803114at2"/>
<dbReference type="Proteomes" id="UP000000421">
    <property type="component" value="Chromosome"/>
</dbReference>
<dbReference type="GO" id="GO:0005829">
    <property type="term" value="C:cytosol"/>
    <property type="evidence" value="ECO:0007669"/>
    <property type="project" value="TreeGrafter"/>
</dbReference>
<dbReference type="GO" id="GO:0050660">
    <property type="term" value="F:flavin adenine dinucleotide binding"/>
    <property type="evidence" value="ECO:0007669"/>
    <property type="project" value="UniProtKB-UniRule"/>
</dbReference>
<dbReference type="GO" id="GO:0047151">
    <property type="term" value="F:tRNA (uracil(54)-C5)-methyltransferase activity, 5,10-methylenetetrahydrofolate-dependent"/>
    <property type="evidence" value="ECO:0007669"/>
    <property type="project" value="UniProtKB-UniRule"/>
</dbReference>
<dbReference type="GO" id="GO:0030488">
    <property type="term" value="P:tRNA methylation"/>
    <property type="evidence" value="ECO:0007669"/>
    <property type="project" value="TreeGrafter"/>
</dbReference>
<dbReference type="GO" id="GO:0002098">
    <property type="term" value="P:tRNA wobble uridine modification"/>
    <property type="evidence" value="ECO:0007669"/>
    <property type="project" value="TreeGrafter"/>
</dbReference>
<dbReference type="Gene3D" id="3.50.50.60">
    <property type="entry name" value="FAD/NAD(P)-binding domain"/>
    <property type="match status" value="2"/>
</dbReference>
<dbReference type="HAMAP" id="MF_01037">
    <property type="entry name" value="TrmFO"/>
    <property type="match status" value="1"/>
</dbReference>
<dbReference type="InterPro" id="IPR036188">
    <property type="entry name" value="FAD/NAD-bd_sf"/>
</dbReference>
<dbReference type="InterPro" id="IPR002218">
    <property type="entry name" value="MnmG-rel"/>
</dbReference>
<dbReference type="InterPro" id="IPR020595">
    <property type="entry name" value="MnmG-rel_CS"/>
</dbReference>
<dbReference type="InterPro" id="IPR040131">
    <property type="entry name" value="MnmG_N"/>
</dbReference>
<dbReference type="InterPro" id="IPR004417">
    <property type="entry name" value="TrmFO"/>
</dbReference>
<dbReference type="NCBIfam" id="TIGR00137">
    <property type="entry name" value="gid_trmFO"/>
    <property type="match status" value="1"/>
</dbReference>
<dbReference type="NCBIfam" id="NF003739">
    <property type="entry name" value="PRK05335.1"/>
    <property type="match status" value="1"/>
</dbReference>
<dbReference type="PANTHER" id="PTHR11806">
    <property type="entry name" value="GLUCOSE INHIBITED DIVISION PROTEIN A"/>
    <property type="match status" value="1"/>
</dbReference>
<dbReference type="PANTHER" id="PTHR11806:SF2">
    <property type="entry name" value="METHYLENETETRAHYDROFOLATE--TRNA-(URACIL-5-)-METHYLTRANSFERASE TRMFO"/>
    <property type="match status" value="1"/>
</dbReference>
<dbReference type="Pfam" id="PF01134">
    <property type="entry name" value="GIDA"/>
    <property type="match status" value="1"/>
</dbReference>
<dbReference type="SUPFAM" id="SSF51905">
    <property type="entry name" value="FAD/NAD(P)-binding domain"/>
    <property type="match status" value="1"/>
</dbReference>
<dbReference type="PROSITE" id="PS01281">
    <property type="entry name" value="GIDA_2"/>
    <property type="match status" value="1"/>
</dbReference>
<feature type="chain" id="PRO_0000117236" description="Methylenetetrahydrofolate--tRNA-(uracil-5-)-methyltransferase TrmFO">
    <location>
        <begin position="1"/>
        <end position="468"/>
    </location>
</feature>
<feature type="binding site" evidence="1">
    <location>
        <begin position="13"/>
        <end position="18"/>
    </location>
    <ligand>
        <name>FAD</name>
        <dbReference type="ChEBI" id="CHEBI:57692"/>
    </ligand>
</feature>
<protein>
    <recommendedName>
        <fullName evidence="1">Methylenetetrahydrofolate--tRNA-(uracil-5-)-methyltransferase TrmFO</fullName>
        <ecNumber evidence="1">2.1.1.74</ecNumber>
    </recommendedName>
    <alternativeName>
        <fullName evidence="1">Folate-dependent tRNA (uracil-5-)-methyltransferase</fullName>
    </alternativeName>
    <alternativeName>
        <fullName evidence="1">Folate-dependent tRNA(M-5-U54)-methyltransferase</fullName>
    </alternativeName>
</protein>
<name>TRMFO_BARHE</name>
<evidence type="ECO:0000255" key="1">
    <source>
        <dbReference type="HAMAP-Rule" id="MF_01037"/>
    </source>
</evidence>
<organism>
    <name type="scientific">Bartonella henselae (strain ATCC 49882 / DSM 28221 / CCUG 30454 / Houston 1)</name>
    <name type="common">Rochalimaea henselae</name>
    <dbReference type="NCBI Taxonomy" id="283166"/>
    <lineage>
        <taxon>Bacteria</taxon>
        <taxon>Pseudomonadati</taxon>
        <taxon>Pseudomonadota</taxon>
        <taxon>Alphaproteobacteria</taxon>
        <taxon>Hyphomicrobiales</taxon>
        <taxon>Bartonellaceae</taxon>
        <taxon>Bartonella</taxon>
    </lineage>
</organism>
<proteinExistence type="inferred from homology"/>
<reference key="1">
    <citation type="journal article" date="2004" name="Proc. Natl. Acad. Sci. U.S.A.">
        <title>The louse-borne human pathogen Bartonella quintana is a genomic derivative of the zoonotic agent Bartonella henselae.</title>
        <authorList>
            <person name="Alsmark U.C.M."/>
            <person name="Frank A.C."/>
            <person name="Karlberg E.O."/>
            <person name="Legault B.-A."/>
            <person name="Ardell D.H."/>
            <person name="Canbaeck B."/>
            <person name="Eriksson A.-S."/>
            <person name="Naeslund A.K."/>
            <person name="Handley S.A."/>
            <person name="Huvet M."/>
            <person name="La Scola B."/>
            <person name="Holmberg M."/>
            <person name="Andersson S.G.E."/>
        </authorList>
    </citation>
    <scope>NUCLEOTIDE SEQUENCE [LARGE SCALE GENOMIC DNA]</scope>
    <source>
        <strain>ATCC 49882 / DSM 28221 / CCUG 30454 / Houston 1</strain>
    </source>
</reference>
<accession>Q6G3Y9</accession>
<keyword id="KW-0963">Cytoplasm</keyword>
<keyword id="KW-0274">FAD</keyword>
<keyword id="KW-0285">Flavoprotein</keyword>
<keyword id="KW-0489">Methyltransferase</keyword>
<keyword id="KW-0520">NAD</keyword>
<keyword id="KW-0521">NADP</keyword>
<keyword id="KW-0808">Transferase</keyword>
<keyword id="KW-0819">tRNA processing</keyword>
<comment type="function">
    <text evidence="1">Catalyzes the folate-dependent formation of 5-methyl-uridine at position 54 (M-5-U54) in all tRNAs.</text>
</comment>
<comment type="catalytic activity">
    <reaction evidence="1">
        <text>uridine(54) in tRNA + (6R)-5,10-methylene-5,6,7,8-tetrahydrofolate + NADH + H(+) = 5-methyluridine(54) in tRNA + (6S)-5,6,7,8-tetrahydrofolate + NAD(+)</text>
        <dbReference type="Rhea" id="RHEA:16873"/>
        <dbReference type="Rhea" id="RHEA-COMP:10167"/>
        <dbReference type="Rhea" id="RHEA-COMP:10193"/>
        <dbReference type="ChEBI" id="CHEBI:15378"/>
        <dbReference type="ChEBI" id="CHEBI:15636"/>
        <dbReference type="ChEBI" id="CHEBI:57453"/>
        <dbReference type="ChEBI" id="CHEBI:57540"/>
        <dbReference type="ChEBI" id="CHEBI:57945"/>
        <dbReference type="ChEBI" id="CHEBI:65315"/>
        <dbReference type="ChEBI" id="CHEBI:74447"/>
        <dbReference type="EC" id="2.1.1.74"/>
    </reaction>
</comment>
<comment type="catalytic activity">
    <reaction evidence="1">
        <text>uridine(54) in tRNA + (6R)-5,10-methylene-5,6,7,8-tetrahydrofolate + NADPH + H(+) = 5-methyluridine(54) in tRNA + (6S)-5,6,7,8-tetrahydrofolate + NADP(+)</text>
        <dbReference type="Rhea" id="RHEA:62372"/>
        <dbReference type="Rhea" id="RHEA-COMP:10167"/>
        <dbReference type="Rhea" id="RHEA-COMP:10193"/>
        <dbReference type="ChEBI" id="CHEBI:15378"/>
        <dbReference type="ChEBI" id="CHEBI:15636"/>
        <dbReference type="ChEBI" id="CHEBI:57453"/>
        <dbReference type="ChEBI" id="CHEBI:57783"/>
        <dbReference type="ChEBI" id="CHEBI:58349"/>
        <dbReference type="ChEBI" id="CHEBI:65315"/>
        <dbReference type="ChEBI" id="CHEBI:74447"/>
        <dbReference type="EC" id="2.1.1.74"/>
    </reaction>
</comment>
<comment type="cofactor">
    <cofactor evidence="1">
        <name>FAD</name>
        <dbReference type="ChEBI" id="CHEBI:57692"/>
    </cofactor>
</comment>
<comment type="subcellular location">
    <subcellularLocation>
        <location evidence="1">Cytoplasm</location>
    </subcellularLocation>
</comment>
<comment type="similarity">
    <text evidence="1">Belongs to the MnmG family. TrmFO subfamily.</text>
</comment>
<gene>
    <name evidence="1" type="primary">trmFO</name>
    <name type="synonym">gid</name>
    <name type="ordered locus">BH05920</name>
</gene>